<organism>
    <name type="scientific">Perisphaeria aff. bicolor (strain BF-2008)</name>
    <name type="common">Cockroach</name>
    <dbReference type="NCBI Taxonomy" id="521515"/>
    <lineage>
        <taxon>Eukaryota</taxon>
        <taxon>Metazoa</taxon>
        <taxon>Ecdysozoa</taxon>
        <taxon>Arthropoda</taxon>
        <taxon>Hexapoda</taxon>
        <taxon>Insecta</taxon>
        <taxon>Pterygota</taxon>
        <taxon>Neoptera</taxon>
        <taxon>Polyneoptera</taxon>
        <taxon>Dictyoptera</taxon>
        <taxon>Blattodea</taxon>
        <taxon>Blaberoidea</taxon>
        <taxon>Blaberidae</taxon>
        <taxon>Perisphaerinae</taxon>
        <taxon>Perisphaeria</taxon>
    </lineage>
</organism>
<reference evidence="4" key="1">
    <citation type="journal article" date="2009" name="BMC Evol. Biol.">
        <title>A proteomic approach for studying insect phylogeny: CAPA peptides of ancient insect taxa (Dictyoptera, Blattoptera) as a test case.</title>
        <authorList>
            <person name="Roth S."/>
            <person name="Fromm B."/>
            <person name="Gaede G."/>
            <person name="Predel R."/>
        </authorList>
    </citation>
    <scope>PROTEIN SEQUENCE</scope>
    <scope>AMIDATION AT VAL-11</scope>
    <source>
        <tissue evidence="2">Abdominal perisympathetic organs</tissue>
    </source>
</reference>
<keyword id="KW-0027">Amidation</keyword>
<keyword id="KW-0903">Direct protein sequencing</keyword>
<keyword id="KW-0527">Neuropeptide</keyword>
<keyword id="KW-0964">Secreted</keyword>
<evidence type="ECO:0000255" key="1"/>
<evidence type="ECO:0000269" key="2">
    <source>
    </source>
</evidence>
<evidence type="ECO:0000303" key="3">
    <source>
    </source>
</evidence>
<evidence type="ECO:0000305" key="4"/>
<feature type="peptide" id="PRO_0000378803" description="Periviscerokinin-2" evidence="2">
    <location>
        <begin position="1"/>
        <end position="11"/>
    </location>
</feature>
<feature type="modified residue" description="Valine amide" evidence="2">
    <location>
        <position position="11"/>
    </location>
</feature>
<comment type="function">
    <text evidence="4">Mediates visceral muscle contractile activity (myotropic activity).</text>
</comment>
<comment type="subcellular location">
    <subcellularLocation>
        <location evidence="4">Secreted</location>
    </subcellularLocation>
</comment>
<comment type="similarity">
    <text evidence="1">Belongs to the periviscerokinin family.</text>
</comment>
<protein>
    <recommendedName>
        <fullName evidence="3">Periviscerokinin-2</fullName>
        <shortName evidence="3">PerBi-PVK-2</shortName>
    </recommendedName>
</protein>
<sequence length="11" mass="1103">GSSGLISMPRV</sequence>
<dbReference type="GO" id="GO:0005576">
    <property type="term" value="C:extracellular region"/>
    <property type="evidence" value="ECO:0007669"/>
    <property type="project" value="UniProtKB-SubCell"/>
</dbReference>
<dbReference type="GO" id="GO:0007218">
    <property type="term" value="P:neuropeptide signaling pathway"/>
    <property type="evidence" value="ECO:0007669"/>
    <property type="project" value="UniProtKB-KW"/>
</dbReference>
<dbReference type="InterPro" id="IPR013231">
    <property type="entry name" value="Periviscerokinin"/>
</dbReference>
<dbReference type="Pfam" id="PF08259">
    <property type="entry name" value="Periviscerokin"/>
    <property type="match status" value="1"/>
</dbReference>
<accession>P85706</accession>
<name>PVK2_PERBB</name>
<proteinExistence type="evidence at protein level"/>